<accession>A0A0H3JVA1</accession>
<reference key="1">
    <citation type="journal article" date="2002" name="Lancet">
        <title>Genome and virulence determinants of high virulence community-acquired MRSA.</title>
        <authorList>
            <person name="Baba T."/>
            <person name="Takeuchi F."/>
            <person name="Kuroda M."/>
            <person name="Yuzawa H."/>
            <person name="Aoki K."/>
            <person name="Oguchi A."/>
            <person name="Nagai Y."/>
            <person name="Iwama N."/>
            <person name="Asano K."/>
            <person name="Naimi T."/>
            <person name="Kuroda H."/>
            <person name="Cui L."/>
            <person name="Yamamoto K."/>
            <person name="Hiramatsu K."/>
        </authorList>
    </citation>
    <scope>NUCLEOTIDE SEQUENCE [LARGE SCALE GENOMIC DNA]</scope>
    <source>
        <strain>MW2</strain>
    </source>
</reference>
<reference key="2">
    <citation type="journal article" date="2012" name="Proc. Natl. Acad. Sci. U.S.A.">
        <title>Methicillin resistance in Staphylococcus aureus requires glycosylated wall teichoic acids.</title>
        <authorList>
            <person name="Brown S."/>
            <person name="Xia G."/>
            <person name="Luhachack L.G."/>
            <person name="Campbell J."/>
            <person name="Meredith T.C."/>
            <person name="Chen C."/>
            <person name="Winstel V."/>
            <person name="Gekeler C."/>
            <person name="Irazoqui J.E."/>
            <person name="Peschel A."/>
            <person name="Walker S."/>
        </authorList>
    </citation>
    <scope>FUNCTION</scope>
    <scope>CATALYTIC ACTIVITY</scope>
    <scope>PATHWAY</scope>
    <scope>INDUCTION</scope>
    <scope>DISRUPTION PHENOTYPE</scope>
    <scope>DRUG TARGET</scope>
    <source>
        <strain>MW2</strain>
        <strain>RN4220</strain>
    </source>
</reference>
<comment type="function">
    <text evidence="2">Attaches beta-O-GlcNAc (beta-O-N-acetyl-D-glucosamine) residues to the C4 position of poly(RboP)-wall teichoic acids (WTAs). Prefers UDP-GlcNAc as a donor substrate and is specific for poly(ribitol phosphate) WTAs. Can also use UDP-Glc and UDP-GalNAc, but not UDP-galactose or UDP-glucuronic acid. Mediates beta-lactam resistance in methicillin resistant Staphylococcus aureus (MRSA) strains.</text>
</comment>
<comment type="catalytic activity">
    <reaction evidence="2">
        <text>4-O-[(D-ribitylphospho)(n)-di{(2R)-glycerylphospho}]-N-acetyl-beta-D-mannosaminyl-(1-&gt;4)-N-acetyl-alpha-D-glucosaminyl di-trans,octa-cis-undecaprenyl diphosphate + n UDP-N-acetyl-alpha-D-glucosamine = 4-O-([2-N-acetyl-beta-D-glucosaminyl-1-D-ribitylphospho](n)-di{[2R]-1-glycerylphospho})-N-acetyl-beta-D-mannosaminyl-(1-&gt;4)-N-acetyl-alpha-D-glucosaminyl di-trans,octa-cis-undecaprenyl diphosphate + n UDP + n H(+)</text>
        <dbReference type="Rhea" id="RHEA:55672"/>
        <dbReference type="Rhea" id="RHEA-COMP:12840"/>
        <dbReference type="Rhea" id="RHEA-COMP:14257"/>
        <dbReference type="ChEBI" id="CHEBI:15378"/>
        <dbReference type="ChEBI" id="CHEBI:57705"/>
        <dbReference type="ChEBI" id="CHEBI:58223"/>
        <dbReference type="ChEBI" id="CHEBI:133896"/>
        <dbReference type="ChEBI" id="CHEBI:139146"/>
        <dbReference type="EC" id="2.4.1.355"/>
    </reaction>
</comment>
<comment type="cofactor">
    <cofactor evidence="1">
        <name>Mn(2+)</name>
        <dbReference type="ChEBI" id="CHEBI:29035"/>
    </cofactor>
</comment>
<comment type="pathway">
    <text evidence="2">Cell wall biogenesis; poly(ribitol phosphate) teichoic acid biosynthesis.</text>
</comment>
<comment type="subunit">
    <text evidence="1">Homotrimer.</text>
</comment>
<comment type="induction">
    <text evidence="2">Expression is up-regulated in the presence of beta-lactams.</text>
</comment>
<comment type="disruption phenotype">
    <text evidence="2">Deletion mutant has no growth or cell division defects, but mutant shows increased susceptibility to beta-lactams. Deletion of the gene leads to the production of only alpha-O-GlcNAcylated WTAs.</text>
</comment>
<comment type="miscellaneous">
    <text evidence="5">TarS is a unique target for compounds used in combination with beta-lactams to treat MRSA infections.</text>
</comment>
<comment type="similarity">
    <text evidence="4">Belongs to the glycosyltransferase 2 family.</text>
</comment>
<keyword id="KW-0046">Antibiotic resistance</keyword>
<keyword id="KW-0961">Cell wall biogenesis/degradation</keyword>
<keyword id="KW-0328">Glycosyltransferase</keyword>
<keyword id="KW-0464">Manganese</keyword>
<keyword id="KW-0479">Metal-binding</keyword>
<keyword id="KW-0777">Teichoic acid biosynthesis</keyword>
<keyword id="KW-0808">Transferase</keyword>
<keyword id="KW-0843">Virulence</keyword>
<proteinExistence type="evidence at protein level"/>
<dbReference type="EC" id="2.4.1.355" evidence="2"/>
<dbReference type="EMBL" id="BA000033">
    <property type="protein sequence ID" value="BAB94099.1"/>
    <property type="molecule type" value="Genomic_DNA"/>
</dbReference>
<dbReference type="RefSeq" id="WP_000975365.1">
    <property type="nucleotide sequence ID" value="NC_003923.1"/>
</dbReference>
<dbReference type="SMR" id="A0A0H3JVA1"/>
<dbReference type="KEGG" id="sam:MW0234"/>
<dbReference type="HOGENOM" id="CLU_018620_2_0_9"/>
<dbReference type="UniPathway" id="UPA00790"/>
<dbReference type="GO" id="GO:0016758">
    <property type="term" value="F:hexosyltransferase activity"/>
    <property type="evidence" value="ECO:0007669"/>
    <property type="project" value="UniProtKB-ARBA"/>
</dbReference>
<dbReference type="GO" id="GO:0046872">
    <property type="term" value="F:metal ion binding"/>
    <property type="evidence" value="ECO:0007669"/>
    <property type="project" value="UniProtKB-KW"/>
</dbReference>
<dbReference type="GO" id="GO:0071555">
    <property type="term" value="P:cell wall organization"/>
    <property type="evidence" value="ECO:0007669"/>
    <property type="project" value="UniProtKB-KW"/>
</dbReference>
<dbReference type="GO" id="GO:0046677">
    <property type="term" value="P:response to antibiotic"/>
    <property type="evidence" value="ECO:0007669"/>
    <property type="project" value="UniProtKB-KW"/>
</dbReference>
<dbReference type="GO" id="GO:0019350">
    <property type="term" value="P:teichoic acid biosynthetic process"/>
    <property type="evidence" value="ECO:0007669"/>
    <property type="project" value="UniProtKB-KW"/>
</dbReference>
<dbReference type="CDD" id="cd00761">
    <property type="entry name" value="Glyco_tranf_GTA_type"/>
    <property type="match status" value="1"/>
</dbReference>
<dbReference type="Gene3D" id="3.90.550.10">
    <property type="entry name" value="Spore Coat Polysaccharide Biosynthesis Protein SpsA, Chain A"/>
    <property type="match status" value="1"/>
</dbReference>
<dbReference type="InterPro" id="IPR001173">
    <property type="entry name" value="Glyco_trans_2-like"/>
</dbReference>
<dbReference type="InterPro" id="IPR029044">
    <property type="entry name" value="Nucleotide-diphossugar_trans"/>
</dbReference>
<dbReference type="InterPro" id="IPR054028">
    <property type="entry name" value="TarS/TarP_linker"/>
</dbReference>
<dbReference type="InterPro" id="IPR041038">
    <property type="entry name" value="TarS_C1"/>
</dbReference>
<dbReference type="InterPro" id="IPR054531">
    <property type="entry name" value="TarS_C2"/>
</dbReference>
<dbReference type="PANTHER" id="PTHR22916">
    <property type="entry name" value="GLYCOSYLTRANSFERASE"/>
    <property type="match status" value="1"/>
</dbReference>
<dbReference type="PANTHER" id="PTHR22916:SF3">
    <property type="entry name" value="UDP-GLCNAC:BETAGAL BETA-1,3-N-ACETYLGLUCOSAMINYLTRANSFERASE-LIKE PROTEIN 1"/>
    <property type="match status" value="1"/>
</dbReference>
<dbReference type="Pfam" id="PF00535">
    <property type="entry name" value="Glycos_transf_2"/>
    <property type="match status" value="1"/>
</dbReference>
<dbReference type="Pfam" id="PF18674">
    <property type="entry name" value="TarS_C1"/>
    <property type="match status" value="1"/>
</dbReference>
<dbReference type="Pfam" id="PF22377">
    <property type="entry name" value="TarS_C2"/>
    <property type="match status" value="1"/>
</dbReference>
<dbReference type="Pfam" id="PF22181">
    <property type="entry name" value="TarS_linker"/>
    <property type="match status" value="1"/>
</dbReference>
<dbReference type="SUPFAM" id="SSF53448">
    <property type="entry name" value="Nucleotide-diphospho-sugar transferases"/>
    <property type="match status" value="1"/>
</dbReference>
<sequence>MMKFSVIVPTYNSEKYITELLNSLAKQDFPKTEFEVVVVDDCSTDQTLQIVEKYRNKLNLKVSQLETNSGGPGKPRNVALKQAEGEFVLFVDSDDYINKETLKDAAAFIDEHHSDVLLIKMKGVNGRGVPQSMFKETAPEVTLLNSRIIYTLSPTKIYRTTLLKDNDIYFPEELKSAEDQLFTMKAYLNANRISVLSDKAYYYATKREGEHMSSAYVSPEDFYEVMRLIAVEILNADLEEAHKDQILAEFLNRHFSFSRTNGFSLKVKLEDQPQWINALGDFIQAVPERVDALVMSKLRPLLHYARAKDIDNYRTVEESYRQGQYYRFDIVDGKLNIQFNEGEPYFEGIDIAKPKVKMTAFKFDNHKIVTELTLNEFMIGEGHYDVRLKLHSRNKKHTMYVPLSVNANKQYRFNIMLEDIKAYLPKEKIWDVFLEVQIGTEVFEVRVGNQRNKYAYTAETSALIHLNNDFYRLTPYFTKDFNNISLYFTAITLTDSISLKLKGKNKIILTGLDRGYVFEEGMASVVLKDDMIMGMLSQTSENEVEILLSKDIKKRDFKNIVKLNTAHMTYSLK</sequence>
<gene>
    <name evidence="3" type="primary">tarS</name>
    <name evidence="6" type="ordered locus">MW0234</name>
</gene>
<name>TARS_STAAW</name>
<feature type="chain" id="PRO_0000446299" description="Poly(ribitol-phosphate) beta-N-acetylglucosaminyltransferase TarS">
    <location>
        <begin position="1"/>
        <end position="573"/>
    </location>
</feature>
<feature type="active site" description="Proton acceptor" evidence="1">
    <location>
        <position position="179"/>
    </location>
</feature>
<feature type="binding site" evidence="1">
    <location>
        <position position="9"/>
    </location>
    <ligand>
        <name>UDP-N-acetyl-alpha-D-glucosamine</name>
        <dbReference type="ChEBI" id="CHEBI:57705"/>
    </ligand>
</feature>
<feature type="binding site" evidence="1">
    <location>
        <position position="41"/>
    </location>
    <ligand>
        <name>UDP-N-acetyl-alpha-D-glucosamine</name>
        <dbReference type="ChEBI" id="CHEBI:57705"/>
    </ligand>
</feature>
<feature type="binding site" evidence="1">
    <location>
        <position position="68"/>
    </location>
    <ligand>
        <name>UDP-N-acetyl-alpha-D-glucosamine</name>
        <dbReference type="ChEBI" id="CHEBI:57705"/>
    </ligand>
</feature>
<feature type="binding site" evidence="1">
    <location>
        <position position="76"/>
    </location>
    <ligand>
        <name>UDP-N-acetyl-alpha-D-glucosamine</name>
        <dbReference type="ChEBI" id="CHEBI:57705"/>
    </ligand>
</feature>
<feature type="binding site" evidence="1">
    <location>
        <begin position="92"/>
        <end position="94"/>
    </location>
    <ligand>
        <name>UDP-N-acetyl-alpha-D-glucosamine</name>
        <dbReference type="ChEBI" id="CHEBI:57705"/>
    </ligand>
</feature>
<feature type="binding site" evidence="1">
    <location>
        <position position="94"/>
    </location>
    <ligand>
        <name>Mn(2+)</name>
        <dbReference type="ChEBI" id="CHEBI:29035"/>
    </ligand>
</feature>
<feature type="binding site" evidence="1">
    <location>
        <position position="127"/>
    </location>
    <ligand>
        <name>UDP-N-acetyl-alpha-D-glucosamine</name>
        <dbReference type="ChEBI" id="CHEBI:57705"/>
    </ligand>
</feature>
<feature type="binding site" evidence="1">
    <location>
        <position position="178"/>
    </location>
    <ligand>
        <name>UDP-N-acetyl-alpha-D-glucosamine</name>
        <dbReference type="ChEBI" id="CHEBI:57705"/>
    </ligand>
</feature>
<feature type="binding site" evidence="1">
    <location>
        <position position="207"/>
    </location>
    <ligand>
        <name>UDP-N-acetyl-alpha-D-glucosamine</name>
        <dbReference type="ChEBI" id="CHEBI:57705"/>
    </ligand>
</feature>
<feature type="binding site" evidence="1">
    <location>
        <begin position="211"/>
        <end position="213"/>
    </location>
    <ligand>
        <name>UDP-N-acetyl-alpha-D-glucosamine</name>
        <dbReference type="ChEBI" id="CHEBI:57705"/>
    </ligand>
</feature>
<organism>
    <name type="scientific">Staphylococcus aureus (strain MW2)</name>
    <dbReference type="NCBI Taxonomy" id="196620"/>
    <lineage>
        <taxon>Bacteria</taxon>
        <taxon>Bacillati</taxon>
        <taxon>Bacillota</taxon>
        <taxon>Bacilli</taxon>
        <taxon>Bacillales</taxon>
        <taxon>Staphylococcaceae</taxon>
        <taxon>Staphylococcus</taxon>
    </lineage>
</organism>
<protein>
    <recommendedName>
        <fullName evidence="4">Poly(ribitol-phosphate) beta-N-acetylglucosaminyltransferase TarS</fullName>
        <ecNumber evidence="2">2.4.1.355</ecNumber>
    </recommendedName>
    <alternativeName>
        <fullName evidence="3">Beta-O-GlcNAc transferase</fullName>
    </alternativeName>
    <alternativeName>
        <fullName evidence="3">Beta-O-GlcNAc-WTA transferase</fullName>
    </alternativeName>
    <alternativeName>
        <fullName evidence="3">WTA glycosyltransferase</fullName>
    </alternativeName>
</protein>
<evidence type="ECO:0000250" key="1">
    <source>
        <dbReference type="UniProtKB" id="A0A0H3JPC6"/>
    </source>
</evidence>
<evidence type="ECO:0000269" key="2">
    <source>
    </source>
</evidence>
<evidence type="ECO:0000303" key="3">
    <source>
    </source>
</evidence>
<evidence type="ECO:0000305" key="4"/>
<evidence type="ECO:0000305" key="5">
    <source>
    </source>
</evidence>
<evidence type="ECO:0000312" key="6">
    <source>
        <dbReference type="EMBL" id="BAB94099.1"/>
    </source>
</evidence>